<organism>
    <name type="scientific">Trichodesmium erythraeum (strain IMS101)</name>
    <dbReference type="NCBI Taxonomy" id="203124"/>
    <lineage>
        <taxon>Bacteria</taxon>
        <taxon>Bacillati</taxon>
        <taxon>Cyanobacteriota</taxon>
        <taxon>Cyanophyceae</taxon>
        <taxon>Oscillatoriophycideae</taxon>
        <taxon>Oscillatoriales</taxon>
        <taxon>Microcoleaceae</taxon>
        <taxon>Trichodesmium</taxon>
    </lineage>
</organism>
<keyword id="KW-0030">Aminoacyl-tRNA synthetase</keyword>
<keyword id="KW-0067">ATP-binding</keyword>
<keyword id="KW-0963">Cytoplasm</keyword>
<keyword id="KW-0436">Ligase</keyword>
<keyword id="KW-0547">Nucleotide-binding</keyword>
<keyword id="KW-0648">Protein biosynthesis</keyword>
<dbReference type="EC" id="6.1.1.19" evidence="1"/>
<dbReference type="EMBL" id="CP000393">
    <property type="protein sequence ID" value="ABG53010.1"/>
    <property type="molecule type" value="Genomic_DNA"/>
</dbReference>
<dbReference type="RefSeq" id="WP_011613340.1">
    <property type="nucleotide sequence ID" value="NC_008312.1"/>
</dbReference>
<dbReference type="SMR" id="Q10XL4"/>
<dbReference type="STRING" id="203124.Tery_3985"/>
<dbReference type="KEGG" id="ter:Tery_3985"/>
<dbReference type="eggNOG" id="COG0018">
    <property type="taxonomic scope" value="Bacteria"/>
</dbReference>
<dbReference type="HOGENOM" id="CLU_006406_5_1_3"/>
<dbReference type="OrthoDB" id="9805987at2"/>
<dbReference type="GO" id="GO:0005737">
    <property type="term" value="C:cytoplasm"/>
    <property type="evidence" value="ECO:0007669"/>
    <property type="project" value="UniProtKB-SubCell"/>
</dbReference>
<dbReference type="GO" id="GO:0004814">
    <property type="term" value="F:arginine-tRNA ligase activity"/>
    <property type="evidence" value="ECO:0007669"/>
    <property type="project" value="UniProtKB-UniRule"/>
</dbReference>
<dbReference type="GO" id="GO:0005524">
    <property type="term" value="F:ATP binding"/>
    <property type="evidence" value="ECO:0007669"/>
    <property type="project" value="UniProtKB-UniRule"/>
</dbReference>
<dbReference type="GO" id="GO:0006420">
    <property type="term" value="P:arginyl-tRNA aminoacylation"/>
    <property type="evidence" value="ECO:0007669"/>
    <property type="project" value="UniProtKB-UniRule"/>
</dbReference>
<dbReference type="CDD" id="cd07956">
    <property type="entry name" value="Anticodon_Ia_Arg"/>
    <property type="match status" value="1"/>
</dbReference>
<dbReference type="CDD" id="cd00671">
    <property type="entry name" value="ArgRS_core"/>
    <property type="match status" value="1"/>
</dbReference>
<dbReference type="FunFam" id="3.40.50.620:FF:000030">
    <property type="entry name" value="Arginine--tRNA ligase"/>
    <property type="match status" value="1"/>
</dbReference>
<dbReference type="FunFam" id="1.10.730.10:FF:000006">
    <property type="entry name" value="Arginyl-tRNA synthetase 2, mitochondrial"/>
    <property type="match status" value="1"/>
</dbReference>
<dbReference type="Gene3D" id="3.30.1360.70">
    <property type="entry name" value="Arginyl tRNA synthetase N-terminal domain"/>
    <property type="match status" value="1"/>
</dbReference>
<dbReference type="Gene3D" id="3.40.50.620">
    <property type="entry name" value="HUPs"/>
    <property type="match status" value="1"/>
</dbReference>
<dbReference type="Gene3D" id="1.10.730.10">
    <property type="entry name" value="Isoleucyl-tRNA Synthetase, Domain 1"/>
    <property type="match status" value="1"/>
</dbReference>
<dbReference type="HAMAP" id="MF_00123">
    <property type="entry name" value="Arg_tRNA_synth"/>
    <property type="match status" value="1"/>
</dbReference>
<dbReference type="InterPro" id="IPR001412">
    <property type="entry name" value="aa-tRNA-synth_I_CS"/>
</dbReference>
<dbReference type="InterPro" id="IPR001278">
    <property type="entry name" value="Arg-tRNA-ligase"/>
</dbReference>
<dbReference type="InterPro" id="IPR005148">
    <property type="entry name" value="Arg-tRNA-synth_N"/>
</dbReference>
<dbReference type="InterPro" id="IPR036695">
    <property type="entry name" value="Arg-tRNA-synth_N_sf"/>
</dbReference>
<dbReference type="InterPro" id="IPR035684">
    <property type="entry name" value="ArgRS_core"/>
</dbReference>
<dbReference type="InterPro" id="IPR008909">
    <property type="entry name" value="DALR_anticod-bd"/>
</dbReference>
<dbReference type="InterPro" id="IPR014729">
    <property type="entry name" value="Rossmann-like_a/b/a_fold"/>
</dbReference>
<dbReference type="InterPro" id="IPR009080">
    <property type="entry name" value="tRNAsynth_Ia_anticodon-bd"/>
</dbReference>
<dbReference type="NCBIfam" id="TIGR00456">
    <property type="entry name" value="argS"/>
    <property type="match status" value="1"/>
</dbReference>
<dbReference type="PANTHER" id="PTHR11956:SF5">
    <property type="entry name" value="ARGININE--TRNA LIGASE, CYTOPLASMIC"/>
    <property type="match status" value="1"/>
</dbReference>
<dbReference type="PANTHER" id="PTHR11956">
    <property type="entry name" value="ARGINYL-TRNA SYNTHETASE"/>
    <property type="match status" value="1"/>
</dbReference>
<dbReference type="Pfam" id="PF03485">
    <property type="entry name" value="Arg_tRNA_synt_N"/>
    <property type="match status" value="1"/>
</dbReference>
<dbReference type="Pfam" id="PF05746">
    <property type="entry name" value="DALR_1"/>
    <property type="match status" value="1"/>
</dbReference>
<dbReference type="Pfam" id="PF00750">
    <property type="entry name" value="tRNA-synt_1d"/>
    <property type="match status" value="1"/>
</dbReference>
<dbReference type="PRINTS" id="PR01038">
    <property type="entry name" value="TRNASYNTHARG"/>
</dbReference>
<dbReference type="SMART" id="SM01016">
    <property type="entry name" value="Arg_tRNA_synt_N"/>
    <property type="match status" value="1"/>
</dbReference>
<dbReference type="SMART" id="SM00836">
    <property type="entry name" value="DALR_1"/>
    <property type="match status" value="1"/>
</dbReference>
<dbReference type="SUPFAM" id="SSF47323">
    <property type="entry name" value="Anticodon-binding domain of a subclass of class I aminoacyl-tRNA synthetases"/>
    <property type="match status" value="1"/>
</dbReference>
<dbReference type="SUPFAM" id="SSF55190">
    <property type="entry name" value="Arginyl-tRNA synthetase (ArgRS), N-terminal 'additional' domain"/>
    <property type="match status" value="1"/>
</dbReference>
<dbReference type="SUPFAM" id="SSF52374">
    <property type="entry name" value="Nucleotidylyl transferase"/>
    <property type="match status" value="1"/>
</dbReference>
<dbReference type="PROSITE" id="PS00178">
    <property type="entry name" value="AA_TRNA_LIGASE_I"/>
    <property type="match status" value="1"/>
</dbReference>
<feature type="chain" id="PRO_1000018141" description="Arginine--tRNA ligase">
    <location>
        <begin position="1"/>
        <end position="585"/>
    </location>
</feature>
<feature type="short sequence motif" description="'HIGH' region">
    <location>
        <begin position="126"/>
        <end position="136"/>
    </location>
</feature>
<comment type="catalytic activity">
    <reaction evidence="1">
        <text>tRNA(Arg) + L-arginine + ATP = L-arginyl-tRNA(Arg) + AMP + diphosphate</text>
        <dbReference type="Rhea" id="RHEA:20301"/>
        <dbReference type="Rhea" id="RHEA-COMP:9658"/>
        <dbReference type="Rhea" id="RHEA-COMP:9673"/>
        <dbReference type="ChEBI" id="CHEBI:30616"/>
        <dbReference type="ChEBI" id="CHEBI:32682"/>
        <dbReference type="ChEBI" id="CHEBI:33019"/>
        <dbReference type="ChEBI" id="CHEBI:78442"/>
        <dbReference type="ChEBI" id="CHEBI:78513"/>
        <dbReference type="ChEBI" id="CHEBI:456215"/>
        <dbReference type="EC" id="6.1.1.19"/>
    </reaction>
</comment>
<comment type="subunit">
    <text evidence="1">Monomer.</text>
</comment>
<comment type="subcellular location">
    <subcellularLocation>
        <location evidence="1">Cytoplasm</location>
    </subcellularLocation>
</comment>
<comment type="similarity">
    <text evidence="1">Belongs to the class-I aminoacyl-tRNA synthetase family.</text>
</comment>
<evidence type="ECO:0000255" key="1">
    <source>
        <dbReference type="HAMAP-Rule" id="MF_00123"/>
    </source>
</evidence>
<sequence>MEPIVEQLKSRFDKALITAFGQDLVGTDPMIVSTTNPKFGDYQCNVAMSLAKKLKDKPKAIATQIINNLNINDYFYPPEIAGPGFINLSLKPEYIENCLETIIKDEKLNISPTKNPQRVVIDFSSPNIAKEMHVGHLRSTIIGDSLARVLEFQGHNVLRLNHVGDWGTQFGMLISYLREAFPEALKTADILDIGDLVAFYKQSKKRFDEDQDFQEKSRQEVVNLQTGAEDSRHAWELLCNQSRREFQVIYDLLDIKLNERGESFYNSMLPGIVEELNRLGLLEESDGAQCVFLSGFTNKEGEDVPLIVKKSDGGYNYATTDLAALVHRIEKEGATRLIYVTDAGQANHFSQVWQVAKKAGWIPENVEIVNVFFGLVLGEDGKKLKTRSGETVRLIDLLDEAINKARNDLEKRLKDEKRLESEEFIKNVAQVVGLSAVKYADLSQNRKSNYVFSFDKMLALQGNTAPYLLYAYVRVQGISRKGEINFEKLRKDAKIILQDEPELVLGKHLLKLNEVLNIVTIELLPNRLCEYLYELSEKFNKFFENCPVLKSEEPLRTSRLLLCDLTARTLKLGLYLLGISVLERM</sequence>
<accession>Q10XL4</accession>
<reference key="1">
    <citation type="journal article" date="2015" name="Proc. Natl. Acad. Sci. U.S.A.">
        <title>Trichodesmium genome maintains abundant, widespread noncoding DNA in situ, despite oligotrophic lifestyle.</title>
        <authorList>
            <person name="Walworth N."/>
            <person name="Pfreundt U."/>
            <person name="Nelson W.C."/>
            <person name="Mincer T."/>
            <person name="Heidelberg J.F."/>
            <person name="Fu F."/>
            <person name="Waterbury J.B."/>
            <person name="Glavina del Rio T."/>
            <person name="Goodwin L."/>
            <person name="Kyrpides N.C."/>
            <person name="Land M.L."/>
            <person name="Woyke T."/>
            <person name="Hutchins D.A."/>
            <person name="Hess W.R."/>
            <person name="Webb E.A."/>
        </authorList>
    </citation>
    <scope>NUCLEOTIDE SEQUENCE [LARGE SCALE GENOMIC DNA]</scope>
    <source>
        <strain>IMS101</strain>
    </source>
</reference>
<protein>
    <recommendedName>
        <fullName evidence="1">Arginine--tRNA ligase</fullName>
        <ecNumber evidence="1">6.1.1.19</ecNumber>
    </recommendedName>
    <alternativeName>
        <fullName evidence="1">Arginyl-tRNA synthetase</fullName>
        <shortName evidence="1">ArgRS</shortName>
    </alternativeName>
</protein>
<gene>
    <name evidence="1" type="primary">argS</name>
    <name type="ordered locus">Tery_3985</name>
</gene>
<name>SYR_TRIEI</name>
<proteinExistence type="inferred from homology"/>